<reference key="1">
    <citation type="journal article" date="2003" name="J. Biol. Chem.">
        <title>De-orphanization of cytochrome P450 2R1: a microsomal vitamin D 25-hydroxylase.</title>
        <authorList>
            <person name="Cheng J.B."/>
            <person name="Motola D.L."/>
            <person name="Mangelsdorf D.J."/>
            <person name="Russell D.W."/>
        </authorList>
    </citation>
    <scope>NUCLEOTIDE SEQUENCE [MRNA]</scope>
    <scope>FUNCTION</scope>
    <scope>CATALYTIC ACTIVITY</scope>
    <scope>TISSUE SPECIFICITY</scope>
    <source>
        <strain>C57BL/6Jx129SvEv</strain>
    </source>
</reference>
<reference key="2">
    <citation type="journal article" date="2013" name="Proc. Natl. Acad. Sci. U.S.A.">
        <title>CYP2R1 is a major, but not exclusive, contributor to 25-hydroxyvitamin D production in vivo.</title>
        <authorList>
            <person name="Zhu J.G."/>
            <person name="Ochalek J.T."/>
            <person name="Kaufmann M."/>
            <person name="Jones G."/>
            <person name="Deluca H.F."/>
        </authorList>
    </citation>
    <scope>DISRUPTION PHENOTYPE</scope>
    <scope>FUNCTION</scope>
    <scope>TISSUE SPECIFICITY</scope>
</reference>
<protein>
    <recommendedName>
        <fullName>Vitamin D 25-hydroxylase</fullName>
        <ecNumber evidence="2">1.14.14.24</ecNumber>
    </recommendedName>
    <alternativeName>
        <fullName>Cytochrome P450 2R1</fullName>
    </alternativeName>
</protein>
<dbReference type="EC" id="1.14.14.24" evidence="2"/>
<dbReference type="EMBL" id="AY323818">
    <property type="protein sequence ID" value="AAQ23115.1"/>
    <property type="molecule type" value="mRNA"/>
</dbReference>
<dbReference type="CCDS" id="CCDS21761.1"/>
<dbReference type="RefSeq" id="NP_796356.2">
    <property type="nucleotide sequence ID" value="NM_177382.4"/>
</dbReference>
<dbReference type="SMR" id="Q6VVW9"/>
<dbReference type="BioGRID" id="232622">
    <property type="interactions" value="8"/>
</dbReference>
<dbReference type="FunCoup" id="Q6VVW9">
    <property type="interactions" value="1153"/>
</dbReference>
<dbReference type="STRING" id="10090.ENSMUSP00000032908"/>
<dbReference type="iPTMnet" id="Q6VVW9"/>
<dbReference type="PhosphoSitePlus" id="Q6VVW9"/>
<dbReference type="PaxDb" id="10090-ENSMUSP00000032908"/>
<dbReference type="ProteomicsDB" id="283812"/>
<dbReference type="Antibodypedia" id="24708">
    <property type="antibodies" value="225 antibodies from 28 providers"/>
</dbReference>
<dbReference type="Ensembl" id="ENSMUST00000032908.15">
    <property type="protein sequence ID" value="ENSMUSP00000032908.9"/>
    <property type="gene ID" value="ENSMUSG00000030670.17"/>
</dbReference>
<dbReference type="GeneID" id="244209"/>
<dbReference type="KEGG" id="mmu:244209"/>
<dbReference type="UCSC" id="uc009jid.2">
    <property type="organism name" value="mouse"/>
</dbReference>
<dbReference type="AGR" id="MGI:2449771"/>
<dbReference type="CTD" id="120227"/>
<dbReference type="MGI" id="MGI:2449771">
    <property type="gene designation" value="Cyp2r1"/>
</dbReference>
<dbReference type="VEuPathDB" id="HostDB:ENSMUSG00000030670"/>
<dbReference type="eggNOG" id="KOG0156">
    <property type="taxonomic scope" value="Eukaryota"/>
</dbReference>
<dbReference type="GeneTree" id="ENSGT00940000158305"/>
<dbReference type="HOGENOM" id="CLU_001570_22_0_1"/>
<dbReference type="InParanoid" id="Q6VVW9"/>
<dbReference type="OMA" id="RQEMYIG"/>
<dbReference type="OrthoDB" id="1055148at2759"/>
<dbReference type="PhylomeDB" id="Q6VVW9"/>
<dbReference type="TreeFam" id="TF352043"/>
<dbReference type="BRENDA" id="1.14.14.24">
    <property type="organism ID" value="3474"/>
</dbReference>
<dbReference type="Reactome" id="R-MMU-196791">
    <property type="pathway name" value="Vitamin D (calciferol) metabolism"/>
</dbReference>
<dbReference type="Reactome" id="R-MMU-211916">
    <property type="pathway name" value="Vitamins"/>
</dbReference>
<dbReference type="UniPathway" id="UPA00954"/>
<dbReference type="BioGRID-ORCS" id="244209">
    <property type="hits" value="4 hits in 78 CRISPR screens"/>
</dbReference>
<dbReference type="PRO" id="PR:Q6VVW9"/>
<dbReference type="Proteomes" id="UP000000589">
    <property type="component" value="Chromosome 7"/>
</dbReference>
<dbReference type="RNAct" id="Q6VVW9">
    <property type="molecule type" value="protein"/>
</dbReference>
<dbReference type="Bgee" id="ENSMUSG00000030670">
    <property type="expression patterns" value="Expressed in left lobe of liver and 72 other cell types or tissues"/>
</dbReference>
<dbReference type="ExpressionAtlas" id="Q6VVW9">
    <property type="expression patterns" value="baseline and differential"/>
</dbReference>
<dbReference type="GO" id="GO:0005789">
    <property type="term" value="C:endoplasmic reticulum membrane"/>
    <property type="evidence" value="ECO:0007669"/>
    <property type="project" value="UniProtKB-SubCell"/>
</dbReference>
<dbReference type="GO" id="GO:1902271">
    <property type="term" value="F:D3 vitamins binding"/>
    <property type="evidence" value="ECO:0000250"/>
    <property type="project" value="UniProtKB"/>
</dbReference>
<dbReference type="GO" id="GO:0020037">
    <property type="term" value="F:heme binding"/>
    <property type="evidence" value="ECO:0000250"/>
    <property type="project" value="UniProtKB"/>
</dbReference>
<dbReference type="GO" id="GO:0005506">
    <property type="term" value="F:iron ion binding"/>
    <property type="evidence" value="ECO:0000250"/>
    <property type="project" value="UniProtKB"/>
</dbReference>
<dbReference type="GO" id="GO:0016705">
    <property type="term" value="F:oxidoreductase activity, acting on paired donors, with incorporation or reduction of molecular oxygen"/>
    <property type="evidence" value="ECO:0007669"/>
    <property type="project" value="InterPro"/>
</dbReference>
<dbReference type="GO" id="GO:0042803">
    <property type="term" value="F:protein homodimerization activity"/>
    <property type="evidence" value="ECO:0000250"/>
    <property type="project" value="UniProtKB"/>
</dbReference>
<dbReference type="GO" id="GO:0030343">
    <property type="term" value="F:vitamin D3 25-hydroxylase activity"/>
    <property type="evidence" value="ECO:0000314"/>
    <property type="project" value="MGI"/>
</dbReference>
<dbReference type="GO" id="GO:0010164">
    <property type="term" value="P:response to cesium ion"/>
    <property type="evidence" value="ECO:0007669"/>
    <property type="project" value="Ensembl"/>
</dbReference>
<dbReference type="GO" id="GO:0010212">
    <property type="term" value="P:response to ionizing radiation"/>
    <property type="evidence" value="ECO:0007669"/>
    <property type="project" value="Ensembl"/>
</dbReference>
<dbReference type="GO" id="GO:0042359">
    <property type="term" value="P:vitamin D metabolic process"/>
    <property type="evidence" value="ECO:0000314"/>
    <property type="project" value="MGI"/>
</dbReference>
<dbReference type="FunFam" id="1.10.630.10:FF:000030">
    <property type="entry name" value="vitamin D 25-hydroxylase isoform X1"/>
    <property type="match status" value="1"/>
</dbReference>
<dbReference type="Gene3D" id="1.10.630.10">
    <property type="entry name" value="Cytochrome P450"/>
    <property type="match status" value="1"/>
</dbReference>
<dbReference type="InterPro" id="IPR001128">
    <property type="entry name" value="Cyt_P450"/>
</dbReference>
<dbReference type="InterPro" id="IPR017972">
    <property type="entry name" value="Cyt_P450_CS"/>
</dbReference>
<dbReference type="InterPro" id="IPR002401">
    <property type="entry name" value="Cyt_P450_E_grp-I"/>
</dbReference>
<dbReference type="InterPro" id="IPR036396">
    <property type="entry name" value="Cyt_P450_sf"/>
</dbReference>
<dbReference type="InterPro" id="IPR050182">
    <property type="entry name" value="Cytochrome_P450_fam2"/>
</dbReference>
<dbReference type="PANTHER" id="PTHR24300">
    <property type="entry name" value="CYTOCHROME P450 508A4-RELATED"/>
    <property type="match status" value="1"/>
</dbReference>
<dbReference type="PANTHER" id="PTHR24300:SF48">
    <property type="entry name" value="VITAMIN D 25-HYDROXYLASE"/>
    <property type="match status" value="1"/>
</dbReference>
<dbReference type="Pfam" id="PF00067">
    <property type="entry name" value="p450"/>
    <property type="match status" value="1"/>
</dbReference>
<dbReference type="PRINTS" id="PR00463">
    <property type="entry name" value="EP450I"/>
</dbReference>
<dbReference type="PRINTS" id="PR00385">
    <property type="entry name" value="P450"/>
</dbReference>
<dbReference type="SUPFAM" id="SSF48264">
    <property type="entry name" value="Cytochrome P450"/>
    <property type="match status" value="1"/>
</dbReference>
<dbReference type="PROSITE" id="PS00086">
    <property type="entry name" value="CYTOCHROME_P450"/>
    <property type="match status" value="1"/>
</dbReference>
<proteinExistence type="evidence at protein level"/>
<name>CP2R1_MOUSE</name>
<keyword id="KW-0256">Endoplasmic reticulum</keyword>
<keyword id="KW-0349">Heme</keyword>
<keyword id="KW-0408">Iron</keyword>
<keyword id="KW-0443">Lipid metabolism</keyword>
<keyword id="KW-0472">Membrane</keyword>
<keyword id="KW-0479">Metal-binding</keyword>
<keyword id="KW-0492">Microsome</keyword>
<keyword id="KW-0503">Monooxygenase</keyword>
<keyword id="KW-0560">Oxidoreductase</keyword>
<keyword id="KW-1185">Reference proteome</keyword>
<gene>
    <name type="primary">Cyp2r1</name>
</gene>
<evidence type="ECO:0000250" key="1">
    <source>
        <dbReference type="UniProtKB" id="Q6VVX0"/>
    </source>
</evidence>
<evidence type="ECO:0000269" key="2">
    <source>
    </source>
</evidence>
<evidence type="ECO:0000269" key="3">
    <source>
    </source>
</evidence>
<evidence type="ECO:0000305" key="4"/>
<evidence type="ECO:0000305" key="5">
    <source>
    </source>
</evidence>
<organism>
    <name type="scientific">Mus musculus</name>
    <name type="common">Mouse</name>
    <dbReference type="NCBI Taxonomy" id="10090"/>
    <lineage>
        <taxon>Eukaryota</taxon>
        <taxon>Metazoa</taxon>
        <taxon>Chordata</taxon>
        <taxon>Craniata</taxon>
        <taxon>Vertebrata</taxon>
        <taxon>Euteleostomi</taxon>
        <taxon>Mammalia</taxon>
        <taxon>Eutheria</taxon>
        <taxon>Euarchontoglires</taxon>
        <taxon>Glires</taxon>
        <taxon>Rodentia</taxon>
        <taxon>Myomorpha</taxon>
        <taxon>Muroidea</taxon>
        <taxon>Muridae</taxon>
        <taxon>Murinae</taxon>
        <taxon>Mus</taxon>
        <taxon>Mus</taxon>
    </lineage>
</organism>
<sequence length="501" mass="57313">MLELPGARACAGALAGALLLLLFVLVVRQLLRQRRPAGFPPGPPRLPFVGNICSLALSADLPHVYMRKQSRVYGEIFSLDLGGISTVVLNGYDVVKECLVHQSEIFADRPCLPLFMKMTKMGGLLNSRYGRGWIDHRRLAVNSFHYFGSGQKSFESKILEETWSLIDAIETYKGGPFDLKQLITNAVSNITNLILFGERFTYEDTDFQHMIELFSENVELAASAPVFLYNAFPWIGILPFGKHQRLFRNADVVYDFLSRLIEKAAVNRKPHLPHHFVDAYLDEMDQGQNDPLSTFSKENLIFSVGELIIAGTETTTNVLRWAILFMALYPNIQGQVHKEIDLIVGHNRRPSWEYKCKMPYTEAVLHEVLRFCNIVPLGIFHATSEDAVVRGYSIPKGTTVITNLYSVHFDEKYWKDPDMFYPERFLDSNGYFTKKEALIPFSLGRRHCLGEQLARMEMFLFFTSLLQQFHLHFPHELVPNLKPRLGMTLQPQPYLICAERR</sequence>
<comment type="function">
    <text evidence="1 2 3">A cytochrome P450 monooxygenase involved in activation of vitamin D precursors (PubMed:12867411, PubMed:24019477). Catalyzes hydroxylation at C-25 of both forms of vitamin D, vitamin D(2) and D(3) (calciol). Can metabolize vitamin D analogs/prodrugs 1alpha-hydroxyvitamin D(2) (doxercalciferol) and 1alpha-hydroxyvitamin D(3) (alfacalcidol) forming 25-hydroxy derivatives. Mechanistically, uses molecular oxygen inserting one oxygen atom into a substrate, and reducing the second into a water molecule, with two electrons provided by NADPH via cytochrome P450 reductase (CPR; NADPH-ferrihemoprotein reductase) (By similarity) (PubMed:12867411, PubMed:24019477).</text>
</comment>
<comment type="catalytic activity">
    <reaction evidence="2">
        <text>calciol + reduced [NADPH--hemoprotein reductase] + O2 = calcidiol + oxidized [NADPH--hemoprotein reductase] + H2O + H(+)</text>
        <dbReference type="Rhea" id="RHEA:32903"/>
        <dbReference type="Rhea" id="RHEA-COMP:11964"/>
        <dbReference type="Rhea" id="RHEA-COMP:11965"/>
        <dbReference type="ChEBI" id="CHEBI:15377"/>
        <dbReference type="ChEBI" id="CHEBI:15378"/>
        <dbReference type="ChEBI" id="CHEBI:15379"/>
        <dbReference type="ChEBI" id="CHEBI:17933"/>
        <dbReference type="ChEBI" id="CHEBI:28940"/>
        <dbReference type="ChEBI" id="CHEBI:57618"/>
        <dbReference type="ChEBI" id="CHEBI:58210"/>
        <dbReference type="EC" id="1.14.14.24"/>
    </reaction>
    <physiologicalReaction direction="left-to-right" evidence="5">
        <dbReference type="Rhea" id="RHEA:32904"/>
    </physiologicalReaction>
</comment>
<comment type="catalytic activity">
    <reaction evidence="1">
        <text>vitamin D2 + reduced [NADPH--hemoprotein reductase] + O2 = 25-hydroxyvitamin D2 + oxidized [NADPH--hemoprotein reductase] + H2O + H(+)</text>
        <dbReference type="Rhea" id="RHEA:46580"/>
        <dbReference type="Rhea" id="RHEA-COMP:11964"/>
        <dbReference type="Rhea" id="RHEA-COMP:11965"/>
        <dbReference type="ChEBI" id="CHEBI:15377"/>
        <dbReference type="ChEBI" id="CHEBI:15378"/>
        <dbReference type="ChEBI" id="CHEBI:15379"/>
        <dbReference type="ChEBI" id="CHEBI:28934"/>
        <dbReference type="ChEBI" id="CHEBI:57618"/>
        <dbReference type="ChEBI" id="CHEBI:58210"/>
        <dbReference type="ChEBI" id="CHEBI:86319"/>
    </reaction>
    <physiologicalReaction direction="left-to-right" evidence="1">
        <dbReference type="Rhea" id="RHEA:46581"/>
    </physiologicalReaction>
</comment>
<comment type="catalytic activity">
    <reaction evidence="1">
        <text>1alpha-hydroxyvitamin D2 + reduced [NADPH--hemoprotein reductase] + O2 = 1alpha,25-dihydroxyvitamin D2 + oxidized [NADPH--hemoprotein reductase] + H2O + H(+)</text>
        <dbReference type="Rhea" id="RHEA:46584"/>
        <dbReference type="Rhea" id="RHEA-COMP:11964"/>
        <dbReference type="Rhea" id="RHEA-COMP:11965"/>
        <dbReference type="ChEBI" id="CHEBI:4712"/>
        <dbReference type="ChEBI" id="CHEBI:15377"/>
        <dbReference type="ChEBI" id="CHEBI:15378"/>
        <dbReference type="ChEBI" id="CHEBI:15379"/>
        <dbReference type="ChEBI" id="CHEBI:57618"/>
        <dbReference type="ChEBI" id="CHEBI:58210"/>
        <dbReference type="ChEBI" id="CHEBI:86320"/>
    </reaction>
    <physiologicalReaction direction="left-to-right" evidence="1">
        <dbReference type="Rhea" id="RHEA:46585"/>
    </physiologicalReaction>
</comment>
<comment type="catalytic activity">
    <reaction evidence="1">
        <text>alfacalcidol + reduced [NADPH--hemoprotein reductase] + O2 = calcitriol + oxidized [NADPH--hemoprotein reductase] + H2O + H(+)</text>
        <dbReference type="Rhea" id="RHEA:49272"/>
        <dbReference type="Rhea" id="RHEA-COMP:11964"/>
        <dbReference type="Rhea" id="RHEA-COMP:11965"/>
        <dbReference type="ChEBI" id="CHEBI:15377"/>
        <dbReference type="ChEBI" id="CHEBI:15378"/>
        <dbReference type="ChEBI" id="CHEBI:15379"/>
        <dbReference type="ChEBI" id="CHEBI:17823"/>
        <dbReference type="ChEBI" id="CHEBI:31186"/>
        <dbReference type="ChEBI" id="CHEBI:57618"/>
        <dbReference type="ChEBI" id="CHEBI:58210"/>
    </reaction>
    <physiologicalReaction direction="left-to-right" evidence="1">
        <dbReference type="Rhea" id="RHEA:49273"/>
    </physiologicalReaction>
</comment>
<comment type="cofactor">
    <cofactor evidence="1">
        <name>heme</name>
        <dbReference type="ChEBI" id="CHEBI:30413"/>
    </cofactor>
</comment>
<comment type="pathway">
    <text evidence="1">Hormone biosynthesis; vitamin D biosynthesis.</text>
</comment>
<comment type="subunit">
    <text evidence="1">Homodimer.</text>
</comment>
<comment type="subcellular location">
    <subcellularLocation>
        <location evidence="1">Endoplasmic reticulum membrane</location>
        <topology>Peripheral membrane protein</topology>
    </subcellularLocation>
    <subcellularLocation>
        <location evidence="1">Microsome membrane</location>
        <topology>Peripheral membrane protein</topology>
    </subcellularLocation>
</comment>
<comment type="tissue specificity">
    <text evidence="2 3">Highly expressed in the liver and testis.</text>
</comment>
<comment type="disruption phenotype">
    <text evidence="3">Mutant mice are born at the expected Mendelian rate and have normal development. They display substantial reduction of serum calcidiol levels.</text>
</comment>
<comment type="similarity">
    <text evidence="4">Belongs to the cytochrome P450 family.</text>
</comment>
<feature type="chain" id="PRO_0000051779" description="Vitamin D 25-hydroxylase">
    <location>
        <begin position="1"/>
        <end position="501"/>
    </location>
</feature>
<feature type="binding site" evidence="1">
    <location>
        <position position="250"/>
    </location>
    <ligand>
        <name>substrate</name>
    </ligand>
</feature>
<feature type="binding site" description="axial binding residue" evidence="1">
    <location>
        <position position="448"/>
    </location>
    <ligand>
        <name>heme</name>
        <dbReference type="ChEBI" id="CHEBI:30413"/>
    </ligand>
    <ligandPart>
        <name>Fe</name>
        <dbReference type="ChEBI" id="CHEBI:18248"/>
    </ligandPart>
</feature>
<accession>Q6VVW9</accession>